<dbReference type="EMBL" id="AP005772">
    <property type="protein sequence ID" value="BAD26190.1"/>
    <property type="molecule type" value="Genomic_DNA"/>
</dbReference>
<dbReference type="EMBL" id="AP005772">
    <property type="protein sequence ID" value="BAD26191.1"/>
    <property type="molecule type" value="Genomic_DNA"/>
</dbReference>
<dbReference type="EMBL" id="AP005772">
    <property type="protein sequence ID" value="BAD26192.1"/>
    <property type="status" value="ALT_SEQ"/>
    <property type="molecule type" value="Genomic_DNA"/>
</dbReference>
<dbReference type="EMBL" id="AP008208">
    <property type="protein sequence ID" value="BAF07960.1"/>
    <property type="molecule type" value="Genomic_DNA"/>
</dbReference>
<dbReference type="EMBL" id="AP014958">
    <property type="protein sequence ID" value="BAS77228.1"/>
    <property type="molecule type" value="Genomic_DNA"/>
</dbReference>
<dbReference type="EMBL" id="AP014958">
    <property type="protein sequence ID" value="BAS77229.1"/>
    <property type="molecule type" value="Genomic_DNA"/>
</dbReference>
<dbReference type="EMBL" id="AK061484">
    <property type="status" value="NOT_ANNOTATED_CDS"/>
    <property type="molecule type" value="mRNA"/>
</dbReference>
<dbReference type="EMBL" id="AK066057">
    <property type="status" value="NOT_ANNOTATED_CDS"/>
    <property type="molecule type" value="mRNA"/>
</dbReference>
<dbReference type="RefSeq" id="XP_015623077.1">
    <property type="nucleotide sequence ID" value="XM_015767591.1"/>
</dbReference>
<dbReference type="SMR" id="Q6H509"/>
<dbReference type="STRING" id="39947.Q6H509"/>
<dbReference type="PaxDb" id="39947-Q6H509"/>
<dbReference type="EnsemblPlants" id="Os02t0174100-02">
    <molecule id="Q6H509-1"/>
    <property type="protein sequence ID" value="Os02t0174100-02"/>
    <property type="gene ID" value="Os02g0174100"/>
</dbReference>
<dbReference type="Gramene" id="Os02t0174100-02">
    <molecule id="Q6H509-1"/>
    <property type="protein sequence ID" value="Os02t0174100-02"/>
    <property type="gene ID" value="Os02g0174100"/>
</dbReference>
<dbReference type="KEGG" id="dosa:Os02g0174100"/>
<dbReference type="eggNOG" id="ENOG502SKF7">
    <property type="taxonomic scope" value="Eukaryota"/>
</dbReference>
<dbReference type="InParanoid" id="Q6H509"/>
<dbReference type="OMA" id="FAISPWE"/>
<dbReference type="OrthoDB" id="514967at2759"/>
<dbReference type="Proteomes" id="UP000000763">
    <property type="component" value="Chromosome 2"/>
</dbReference>
<dbReference type="Proteomes" id="UP000059680">
    <property type="component" value="Chromosome 2"/>
</dbReference>
<dbReference type="ExpressionAtlas" id="Q6H509">
    <property type="expression patterns" value="baseline and differential"/>
</dbReference>
<dbReference type="GO" id="GO:0005634">
    <property type="term" value="C:nucleus"/>
    <property type="evidence" value="ECO:0007669"/>
    <property type="project" value="UniProtKB-SubCell"/>
</dbReference>
<dbReference type="GO" id="GO:0003677">
    <property type="term" value="F:DNA binding"/>
    <property type="evidence" value="ECO:0007669"/>
    <property type="project" value="UniProtKB-KW"/>
</dbReference>
<dbReference type="GO" id="GO:0008270">
    <property type="term" value="F:zinc ion binding"/>
    <property type="evidence" value="ECO:0007669"/>
    <property type="project" value="UniProtKB-KW"/>
</dbReference>
<dbReference type="FunFam" id="4.10.1100.10:FF:000001">
    <property type="entry name" value="Squamosa promoter-binding-like protein 14"/>
    <property type="match status" value="1"/>
</dbReference>
<dbReference type="Gene3D" id="4.10.1100.10">
    <property type="entry name" value="Transcription factor, SBP-box domain"/>
    <property type="match status" value="1"/>
</dbReference>
<dbReference type="InterPro" id="IPR044817">
    <property type="entry name" value="SBP-like"/>
</dbReference>
<dbReference type="InterPro" id="IPR004333">
    <property type="entry name" value="SBP_dom"/>
</dbReference>
<dbReference type="InterPro" id="IPR036893">
    <property type="entry name" value="SBP_sf"/>
</dbReference>
<dbReference type="PANTHER" id="PTHR31251">
    <property type="entry name" value="SQUAMOSA PROMOTER-BINDING-LIKE PROTEIN 4"/>
    <property type="match status" value="1"/>
</dbReference>
<dbReference type="PANTHER" id="PTHR31251:SF7">
    <property type="entry name" value="SQUAMOSA PROMOTER-BINDING-LIKE PROTEIN 4"/>
    <property type="match status" value="1"/>
</dbReference>
<dbReference type="Pfam" id="PF03110">
    <property type="entry name" value="SBP"/>
    <property type="match status" value="1"/>
</dbReference>
<dbReference type="SUPFAM" id="SSF103612">
    <property type="entry name" value="SBT domain"/>
    <property type="match status" value="1"/>
</dbReference>
<dbReference type="PROSITE" id="PS51141">
    <property type="entry name" value="ZF_SBP"/>
    <property type="match status" value="1"/>
</dbReference>
<sequence>MDWMPPPKPTSPRSPPLLWDWADAAVPGSSSGEVSAAAAAAAAHPGRRRKEKRGRAEEGGGGGGEVRCQVEGCGVELVGVKDYHRKHRVCEAHSKFPRVVVAGQERRFCQQCSRFHALSEFDQKKRSCRRRLYDHNARRRKPQTDVFSYASARPPSSLLFDDNRQISFVWNKAPLSHVRPFAISPWESSSEVGTTDGHIYLDKSHISKSLPAFNTDIDELLPMKDFSAATIWMFFGVLFIRTAQESCMSFH</sequence>
<comment type="function">
    <text evidence="1">Trans-acting factor that binds specifically to the consensus nucleotide sequence 5'-TNCGTACAA-3' (By similarity). May be involved in panicle development.</text>
</comment>
<comment type="subcellular location">
    <subcellularLocation>
        <location evidence="7">Nucleus</location>
    </subcellularLocation>
</comment>
<comment type="alternative products">
    <event type="alternative splicing"/>
    <isoform>
        <id>Q6H509-1</id>
        <name>1</name>
        <sequence type="displayed"/>
    </isoform>
    <isoform>
        <id>Q6H509-2</id>
        <name>2</name>
        <sequence type="described" ref="VSP_028927 VSP_028928"/>
    </isoform>
</comment>
<comment type="tissue specificity">
    <text evidence="5">Expressed in stems, leaf sheaths, and young panicles.</text>
</comment>
<comment type="induction">
    <text evidence="8">Negatively regulated by microRNAs miR156b and miR156h.</text>
</comment>
<comment type="domain">
    <text evidence="1">The SBP-type zinc finger is required for the binding to DNA.</text>
</comment>
<comment type="sequence caution" evidence="7">
    <conflict type="erroneous gene model prediction">
        <sequence resource="EMBL-CDS" id="BAD26192"/>
    </conflict>
</comment>
<organism>
    <name type="scientific">Oryza sativa subsp. japonica</name>
    <name type="common">Rice</name>
    <dbReference type="NCBI Taxonomy" id="39947"/>
    <lineage>
        <taxon>Eukaryota</taxon>
        <taxon>Viridiplantae</taxon>
        <taxon>Streptophyta</taxon>
        <taxon>Embryophyta</taxon>
        <taxon>Tracheophyta</taxon>
        <taxon>Spermatophyta</taxon>
        <taxon>Magnoliopsida</taxon>
        <taxon>Liliopsida</taxon>
        <taxon>Poales</taxon>
        <taxon>Poaceae</taxon>
        <taxon>BOP clade</taxon>
        <taxon>Oryzoideae</taxon>
        <taxon>Oryzeae</taxon>
        <taxon>Oryzinae</taxon>
        <taxon>Oryza</taxon>
        <taxon>Oryza sativa</taxon>
    </lineage>
</organism>
<gene>
    <name type="primary">SPL4</name>
    <name type="ordered locus">Os02g0174100</name>
    <name type="ordered locus">LOC_Os02g07780</name>
    <name type="ORF">OSJNBa0073A21.21-1</name>
    <name type="ORF">OSJNBa0073A21.21-2</name>
    <name type="ORF">OSJNBa0073A21.21-3</name>
</gene>
<feature type="chain" id="PRO_0000308227" description="Squamosa promoter-binding-like protein 4">
    <location>
        <begin position="1"/>
        <end position="251"/>
    </location>
</feature>
<feature type="zinc finger region" description="SBP-type" evidence="3">
    <location>
        <begin position="65"/>
        <end position="142"/>
    </location>
</feature>
<feature type="region of interest" description="Disordered" evidence="4">
    <location>
        <begin position="1"/>
        <end position="64"/>
    </location>
</feature>
<feature type="short sequence motif" description="Bipartite nuclear localization signal" evidence="2">
    <location>
        <begin position="125"/>
        <end position="141"/>
    </location>
</feature>
<feature type="compositionally biased region" description="Pro residues" evidence="4">
    <location>
        <begin position="1"/>
        <end position="15"/>
    </location>
</feature>
<feature type="compositionally biased region" description="Low complexity" evidence="4">
    <location>
        <begin position="24"/>
        <end position="43"/>
    </location>
</feature>
<feature type="binding site" evidence="3">
    <location>
        <position position="68"/>
    </location>
    <ligand>
        <name>Zn(2+)</name>
        <dbReference type="ChEBI" id="CHEBI:29105"/>
        <label>1</label>
    </ligand>
</feature>
<feature type="binding site" evidence="3">
    <location>
        <position position="73"/>
    </location>
    <ligand>
        <name>Zn(2+)</name>
        <dbReference type="ChEBI" id="CHEBI:29105"/>
        <label>1</label>
    </ligand>
</feature>
<feature type="binding site" evidence="3">
    <location>
        <position position="90"/>
    </location>
    <ligand>
        <name>Zn(2+)</name>
        <dbReference type="ChEBI" id="CHEBI:29105"/>
        <label>1</label>
    </ligand>
</feature>
<feature type="binding site" evidence="3">
    <location>
        <position position="93"/>
    </location>
    <ligand>
        <name>Zn(2+)</name>
        <dbReference type="ChEBI" id="CHEBI:29105"/>
        <label>1</label>
    </ligand>
</feature>
<feature type="binding site" evidence="3">
    <location>
        <position position="109"/>
    </location>
    <ligand>
        <name>Zn(2+)</name>
        <dbReference type="ChEBI" id="CHEBI:29105"/>
        <label>2</label>
    </ligand>
</feature>
<feature type="binding site" evidence="3">
    <location>
        <position position="112"/>
    </location>
    <ligand>
        <name>Zn(2+)</name>
        <dbReference type="ChEBI" id="CHEBI:29105"/>
        <label>2</label>
    </ligand>
</feature>
<feature type="binding site" evidence="3">
    <location>
        <position position="116"/>
    </location>
    <ligand>
        <name>Zn(2+)</name>
        <dbReference type="ChEBI" id="CHEBI:29105"/>
        <label>2</label>
    </ligand>
</feature>
<feature type="binding site" evidence="3">
    <location>
        <position position="128"/>
    </location>
    <ligand>
        <name>Zn(2+)</name>
        <dbReference type="ChEBI" id="CHEBI:29105"/>
        <label>2</label>
    </ligand>
</feature>
<feature type="splice variant" id="VSP_028927" description="In isoform 2." evidence="6">
    <original>DFSAATIWMF</original>
    <variation>GMIFQRCKFS</variation>
    <location>
        <begin position="225"/>
        <end position="234"/>
    </location>
</feature>
<feature type="splice variant" id="VSP_028928" description="In isoform 2." evidence="6">
    <location>
        <begin position="235"/>
        <end position="251"/>
    </location>
</feature>
<reference key="1">
    <citation type="journal article" date="2005" name="Nature">
        <title>The map-based sequence of the rice genome.</title>
        <authorList>
            <consortium name="International rice genome sequencing project (IRGSP)"/>
        </authorList>
    </citation>
    <scope>NUCLEOTIDE SEQUENCE [LARGE SCALE GENOMIC DNA]</scope>
    <source>
        <strain>cv. Nipponbare</strain>
    </source>
</reference>
<reference key="2">
    <citation type="journal article" date="2008" name="Nucleic Acids Res.">
        <title>The rice annotation project database (RAP-DB): 2008 update.</title>
        <authorList>
            <consortium name="The rice annotation project (RAP)"/>
        </authorList>
    </citation>
    <scope>GENOME REANNOTATION</scope>
    <source>
        <strain>cv. Nipponbare</strain>
    </source>
</reference>
<reference key="3">
    <citation type="journal article" date="2013" name="Rice">
        <title>Improvement of the Oryza sativa Nipponbare reference genome using next generation sequence and optical map data.</title>
        <authorList>
            <person name="Kawahara Y."/>
            <person name="de la Bastide M."/>
            <person name="Hamilton J.P."/>
            <person name="Kanamori H."/>
            <person name="McCombie W.R."/>
            <person name="Ouyang S."/>
            <person name="Schwartz D.C."/>
            <person name="Tanaka T."/>
            <person name="Wu J."/>
            <person name="Zhou S."/>
            <person name="Childs K.L."/>
            <person name="Davidson R.M."/>
            <person name="Lin H."/>
            <person name="Quesada-Ocampo L."/>
            <person name="Vaillancourt B."/>
            <person name="Sakai H."/>
            <person name="Lee S.S."/>
            <person name="Kim J."/>
            <person name="Numa H."/>
            <person name="Itoh T."/>
            <person name="Buell C.R."/>
            <person name="Matsumoto T."/>
        </authorList>
    </citation>
    <scope>GENOME REANNOTATION</scope>
    <source>
        <strain>cv. Nipponbare</strain>
    </source>
</reference>
<reference key="4">
    <citation type="journal article" date="2003" name="Science">
        <title>Collection, mapping, and annotation of over 28,000 cDNA clones from japonica rice.</title>
        <authorList>
            <consortium name="The rice full-length cDNA consortium"/>
        </authorList>
    </citation>
    <scope>NUCLEOTIDE SEQUENCE [LARGE SCALE MRNA] (ISOFORMS 1 AND 2)</scope>
    <source>
        <strain>cv. Nipponbare</strain>
    </source>
</reference>
<reference key="5">
    <citation type="journal article" date="2006" name="Plant Physiol.">
        <title>Genomic organization, differential expression, and interaction of SQUAMOSA promoter-binding-like transcription factors and microRNA156 in rice.</title>
        <authorList>
            <person name="Xie K."/>
            <person name="Wu C."/>
            <person name="Xiong L."/>
        </authorList>
    </citation>
    <scope>TISSUE SPECIFICITY</scope>
    <scope>INDUCTION</scope>
    <scope>GENE FAMILY</scope>
    <scope>NOMENCLATURE</scope>
</reference>
<reference key="6">
    <citation type="journal article" date="2008" name="Gene">
        <title>Comparative study of SBP-box gene family in Arabidopsis and rice.</title>
        <authorList>
            <person name="Yang Z."/>
            <person name="Wang X."/>
            <person name="Gu S."/>
            <person name="Hu Z."/>
            <person name="Xu H."/>
            <person name="Xu C."/>
        </authorList>
    </citation>
    <scope>GENE FAMILY</scope>
</reference>
<evidence type="ECO:0000250" key="1"/>
<evidence type="ECO:0000255" key="2"/>
<evidence type="ECO:0000255" key="3">
    <source>
        <dbReference type="PROSITE-ProRule" id="PRU00470"/>
    </source>
</evidence>
<evidence type="ECO:0000256" key="4">
    <source>
        <dbReference type="SAM" id="MobiDB-lite"/>
    </source>
</evidence>
<evidence type="ECO:0000269" key="5">
    <source>
    </source>
</evidence>
<evidence type="ECO:0000303" key="6">
    <source>
    </source>
</evidence>
<evidence type="ECO:0000305" key="7"/>
<evidence type="ECO:0000305" key="8">
    <source>
    </source>
</evidence>
<accession>Q6H509</accession>
<accession>Q6H507</accession>
<accession>Q6H508</accession>
<proteinExistence type="evidence at transcript level"/>
<name>SPL4_ORYSJ</name>
<keyword id="KW-0025">Alternative splicing</keyword>
<keyword id="KW-0238">DNA-binding</keyword>
<keyword id="KW-0479">Metal-binding</keyword>
<keyword id="KW-0539">Nucleus</keyword>
<keyword id="KW-1185">Reference proteome</keyword>
<keyword id="KW-0804">Transcription</keyword>
<keyword id="KW-0805">Transcription regulation</keyword>
<keyword id="KW-0862">Zinc</keyword>
<keyword id="KW-0863">Zinc-finger</keyword>
<protein>
    <recommendedName>
        <fullName>Squamosa promoter-binding-like protein 4</fullName>
    </recommendedName>
</protein>